<organism>
    <name type="scientific">Archaeoglobus fulgidus (strain ATCC 49558 / DSM 4304 / JCM 9628 / NBRC 100126 / VC-16)</name>
    <dbReference type="NCBI Taxonomy" id="224325"/>
    <lineage>
        <taxon>Archaea</taxon>
        <taxon>Methanobacteriati</taxon>
        <taxon>Methanobacteriota</taxon>
        <taxon>Archaeoglobi</taxon>
        <taxon>Archaeoglobales</taxon>
        <taxon>Archaeoglobaceae</taxon>
        <taxon>Archaeoglobus</taxon>
    </lineage>
</organism>
<dbReference type="EMBL" id="AE000782">
    <property type="protein sequence ID" value="AAB89507.1"/>
    <property type="molecule type" value="Genomic_DNA"/>
</dbReference>
<dbReference type="PIR" id="B69468">
    <property type="entry name" value="B69468"/>
</dbReference>
<dbReference type="RefSeq" id="WP_010879243.1">
    <property type="nucleotide sequence ID" value="NC_000917.1"/>
</dbReference>
<dbReference type="PDB" id="3NCP">
    <property type="method" value="X-ray"/>
    <property type="resolution" value="2.35 A"/>
    <property type="chains" value="A/B/C/D=1-112"/>
</dbReference>
<dbReference type="PDB" id="3NCQ">
    <property type="method" value="X-ray"/>
    <property type="resolution" value="1.24 A"/>
    <property type="chains" value="A/B/C=1-112"/>
</dbReference>
<dbReference type="PDB" id="3NCR">
    <property type="method" value="X-ray"/>
    <property type="resolution" value="1.44 A"/>
    <property type="chains" value="A/B/C=1-112"/>
</dbReference>
<dbReference type="PDBsum" id="3NCP"/>
<dbReference type="PDBsum" id="3NCQ"/>
<dbReference type="PDBsum" id="3NCR"/>
<dbReference type="SMR" id="O28527"/>
<dbReference type="STRING" id="224325.AF_1747"/>
<dbReference type="PaxDb" id="224325-AF_1747"/>
<dbReference type="EnsemblBacteria" id="AAB89507">
    <property type="protein sequence ID" value="AAB89507"/>
    <property type="gene ID" value="AF_1747"/>
</dbReference>
<dbReference type="GeneID" id="24795491"/>
<dbReference type="KEGG" id="afu:AF_1747"/>
<dbReference type="eggNOG" id="arCOG02305">
    <property type="taxonomic scope" value="Archaea"/>
</dbReference>
<dbReference type="HOGENOM" id="CLU_082268_0_0_2"/>
<dbReference type="OrthoDB" id="49906at2157"/>
<dbReference type="PhylomeDB" id="O28527"/>
<dbReference type="EvolutionaryTrace" id="O28527"/>
<dbReference type="Proteomes" id="UP000002199">
    <property type="component" value="Chromosome"/>
</dbReference>
<dbReference type="GO" id="GO:0005829">
    <property type="term" value="C:cytosol"/>
    <property type="evidence" value="ECO:0007669"/>
    <property type="project" value="TreeGrafter"/>
</dbReference>
<dbReference type="GO" id="GO:0005524">
    <property type="term" value="F:ATP binding"/>
    <property type="evidence" value="ECO:0007669"/>
    <property type="project" value="UniProtKB-KW"/>
</dbReference>
<dbReference type="GO" id="GO:0030234">
    <property type="term" value="F:enzyme regulator activity"/>
    <property type="evidence" value="ECO:0007669"/>
    <property type="project" value="InterPro"/>
</dbReference>
<dbReference type="GO" id="GO:0006808">
    <property type="term" value="P:regulation of nitrogen utilization"/>
    <property type="evidence" value="ECO:0007669"/>
    <property type="project" value="InterPro"/>
</dbReference>
<dbReference type="Gene3D" id="3.30.70.120">
    <property type="match status" value="1"/>
</dbReference>
<dbReference type="InterPro" id="IPR002187">
    <property type="entry name" value="N-reg_PII"/>
</dbReference>
<dbReference type="InterPro" id="IPR011322">
    <property type="entry name" value="N-reg_PII-like_a/b"/>
</dbReference>
<dbReference type="InterPro" id="IPR015867">
    <property type="entry name" value="N-reg_PII/ATP_PRibTrfase_C"/>
</dbReference>
<dbReference type="InterPro" id="IPR017918">
    <property type="entry name" value="N-reg_PII_CS"/>
</dbReference>
<dbReference type="PANTHER" id="PTHR30115">
    <property type="entry name" value="NITROGEN REGULATORY PROTEIN P-II"/>
    <property type="match status" value="1"/>
</dbReference>
<dbReference type="PANTHER" id="PTHR30115:SF11">
    <property type="entry name" value="NITROGEN REGULATORY PROTEIN P-II HOMOLOG"/>
    <property type="match status" value="1"/>
</dbReference>
<dbReference type="Pfam" id="PF00543">
    <property type="entry name" value="P-II"/>
    <property type="match status" value="1"/>
</dbReference>
<dbReference type="PRINTS" id="PR00340">
    <property type="entry name" value="PIIGLNB"/>
</dbReference>
<dbReference type="SMART" id="SM00938">
    <property type="entry name" value="P-II"/>
    <property type="match status" value="1"/>
</dbReference>
<dbReference type="SUPFAM" id="SSF54913">
    <property type="entry name" value="GlnB-like"/>
    <property type="match status" value="1"/>
</dbReference>
<dbReference type="PROSITE" id="PS00638">
    <property type="entry name" value="PII_GLNB_CTER"/>
    <property type="match status" value="1"/>
</dbReference>
<dbReference type="PROSITE" id="PS51343">
    <property type="entry name" value="PII_GLNB_DOM"/>
    <property type="match status" value="1"/>
</dbReference>
<sequence length="112" mass="12320">MKKIEAIVRAEKFPEVKAALEERGFYGMTVTDVKGRGQQGGMQIQFRGRTMEVTLLPKVKLEIVVKDDAVEEVIGLIVNSAFTGSPGDGKIFIIPVEDVVRIRTGERGDDSL</sequence>
<name>GLNK2_ARCFU</name>
<reference key="1">
    <citation type="journal article" date="1997" name="Nature">
        <title>The complete genome sequence of the hyperthermophilic, sulphate-reducing archaeon Archaeoglobus fulgidus.</title>
        <authorList>
            <person name="Klenk H.-P."/>
            <person name="Clayton R.A."/>
            <person name="Tomb J.-F."/>
            <person name="White O."/>
            <person name="Nelson K.E."/>
            <person name="Ketchum K.A."/>
            <person name="Dodson R.J."/>
            <person name="Gwinn M.L."/>
            <person name="Hickey E.K."/>
            <person name="Peterson J.D."/>
            <person name="Richardson D.L."/>
            <person name="Kerlavage A.R."/>
            <person name="Graham D.E."/>
            <person name="Kyrpides N.C."/>
            <person name="Fleischmann R.D."/>
            <person name="Quackenbush J."/>
            <person name="Lee N.H."/>
            <person name="Sutton G.G."/>
            <person name="Gill S.R."/>
            <person name="Kirkness E.F."/>
            <person name="Dougherty B.A."/>
            <person name="McKenney K."/>
            <person name="Adams M.D."/>
            <person name="Loftus B.J."/>
            <person name="Peterson S.N."/>
            <person name="Reich C.I."/>
            <person name="McNeil L.K."/>
            <person name="Badger J.H."/>
            <person name="Glodek A."/>
            <person name="Zhou L."/>
            <person name="Overbeek R."/>
            <person name="Gocayne J.D."/>
            <person name="Weidman J.F."/>
            <person name="McDonald L.A."/>
            <person name="Utterback T.R."/>
            <person name="Cotton M.D."/>
            <person name="Spriggs T."/>
            <person name="Artiach P."/>
            <person name="Kaine B.P."/>
            <person name="Sykes S.M."/>
            <person name="Sadow P.W."/>
            <person name="D'Andrea K.P."/>
            <person name="Bowman C."/>
            <person name="Fujii C."/>
            <person name="Garland S.A."/>
            <person name="Mason T.M."/>
            <person name="Olsen G.J."/>
            <person name="Fraser C.M."/>
            <person name="Smith H.O."/>
            <person name="Woese C.R."/>
            <person name="Venter J.C."/>
        </authorList>
    </citation>
    <scope>NUCLEOTIDE SEQUENCE [LARGE SCALE GENOMIC DNA]</scope>
    <source>
        <strain>ATCC 49558 / DSM 4304 / JCM 9628 / NBRC 100126 / VC-16</strain>
    </source>
</reference>
<reference key="2">
    <citation type="journal article" date="2011" name="PLoS ONE">
        <title>Mechanism of disruption of the Amt-GlnK complex by P(II)-mediated sensing of 2-oxoglutarate.</title>
        <authorList>
            <person name="Maier S."/>
            <person name="Schleberger P."/>
            <person name="Lu W."/>
            <person name="Wacker T."/>
            <person name="Pfluger T."/>
            <person name="Litz C."/>
            <person name="Andrade S.L."/>
        </authorList>
    </citation>
    <scope>MUTAGENESIS OF PRO-86</scope>
</reference>
<reference evidence="9 10 11" key="3">
    <citation type="journal article" date="2010" name="J. Mol. Biol.">
        <title>Cooperative binding of MgATP and MgADP in the trimeric P(II) protein GlnK2 from Archaeoglobus fulgidus.</title>
        <authorList>
            <person name="Helfmann S."/>
            <person name="Lu W."/>
            <person name="Litz C."/>
            <person name="Andrade S.L."/>
        </authorList>
    </citation>
    <scope>X-RAY CRYSTALLOGRAPHY (1.24 ANGSTROMS) IN COMPLEXES WITH ADP AND ATP</scope>
    <scope>ACTIVITY REGULATION</scope>
    <scope>SUBUNIT</scope>
</reference>
<keyword id="KW-0002">3D-structure</keyword>
<keyword id="KW-0067">ATP-binding</keyword>
<keyword id="KW-0963">Cytoplasm</keyword>
<keyword id="KW-0547">Nucleotide-binding</keyword>
<keyword id="KW-1185">Reference proteome</keyword>
<gene>
    <name evidence="6" type="primary">glnK2</name>
    <name evidence="8" type="ordered locus">AF_1747</name>
</gene>
<feature type="chain" id="PRO_0000453013" description="Nitrogen regulatory protein GlnK2">
    <location>
        <begin position="1"/>
        <end position="112"/>
    </location>
</feature>
<feature type="binding site" evidence="4 11">
    <location>
        <position position="29"/>
    </location>
    <ligand>
        <name>ADP</name>
        <dbReference type="ChEBI" id="CHEBI:456216"/>
    </ligand>
</feature>
<feature type="binding site" evidence="4 10">
    <location>
        <position position="29"/>
    </location>
    <ligand>
        <name>ATP</name>
        <dbReference type="ChEBI" id="CHEBI:30616"/>
    </ligand>
</feature>
<feature type="binding site" evidence="4 11">
    <location>
        <begin position="38"/>
        <end position="39"/>
    </location>
    <ligand>
        <name>ADP</name>
        <dbReference type="ChEBI" id="CHEBI:456216"/>
    </ligand>
</feature>
<feature type="binding site" evidence="4 10">
    <location>
        <begin position="38"/>
        <end position="39"/>
    </location>
    <ligand>
        <name>ATP</name>
        <dbReference type="ChEBI" id="CHEBI:30616"/>
    </ligand>
</feature>
<feature type="binding site" evidence="4 11">
    <location>
        <position position="64"/>
    </location>
    <ligand>
        <name>ADP</name>
        <dbReference type="ChEBI" id="CHEBI:456216"/>
    </ligand>
</feature>
<feature type="binding site" evidence="4 10">
    <location>
        <position position="64"/>
    </location>
    <ligand>
        <name>ATP</name>
        <dbReference type="ChEBI" id="CHEBI:30616"/>
    </ligand>
</feature>
<feature type="binding site" evidence="4 11">
    <location>
        <begin position="87"/>
        <end position="90"/>
    </location>
    <ligand>
        <name>ADP</name>
        <dbReference type="ChEBI" id="CHEBI:456216"/>
    </ligand>
</feature>
<feature type="binding site" evidence="4 10">
    <location>
        <begin position="87"/>
        <end position="90"/>
    </location>
    <ligand>
        <name>ATP</name>
        <dbReference type="ChEBI" id="CHEBI:30616"/>
    </ligand>
</feature>
<feature type="binding site" evidence="4 10">
    <location>
        <begin position="101"/>
        <end position="103"/>
    </location>
    <ligand>
        <name>ATP</name>
        <dbReference type="ChEBI" id="CHEBI:30616"/>
    </ligand>
</feature>
<feature type="mutagenesis site" description="Does not confer the ability to bind 2-oxoglutarate." evidence="5">
    <original>P</original>
    <variation>F</variation>
    <variation>I</variation>
    <location>
        <position position="86"/>
    </location>
</feature>
<feature type="strand" evidence="12">
    <location>
        <begin position="2"/>
        <end position="8"/>
    </location>
</feature>
<feature type="turn" evidence="12">
    <location>
        <begin position="10"/>
        <end position="12"/>
    </location>
</feature>
<feature type="helix" evidence="12">
    <location>
        <begin position="13"/>
        <end position="22"/>
    </location>
</feature>
<feature type="strand" evidence="12">
    <location>
        <begin position="28"/>
        <end position="36"/>
    </location>
</feature>
<feature type="turn" evidence="12">
    <location>
        <begin position="39"/>
        <end position="42"/>
    </location>
</feature>
<feature type="strand" evidence="12">
    <location>
        <begin position="46"/>
        <end position="49"/>
    </location>
</feature>
<feature type="strand" evidence="12">
    <location>
        <begin position="56"/>
        <end position="65"/>
    </location>
</feature>
<feature type="helix" evidence="12">
    <location>
        <begin position="67"/>
        <end position="69"/>
    </location>
</feature>
<feature type="helix" evidence="12">
    <location>
        <begin position="70"/>
        <end position="81"/>
    </location>
</feature>
<feature type="strand" evidence="12">
    <location>
        <begin position="90"/>
        <end position="95"/>
    </location>
</feature>
<feature type="strand" evidence="12">
    <location>
        <begin position="97"/>
        <end position="101"/>
    </location>
</feature>
<feature type="turn" evidence="12">
    <location>
        <begin position="102"/>
        <end position="104"/>
    </location>
</feature>
<feature type="helix" evidence="12">
    <location>
        <begin position="109"/>
        <end position="111"/>
    </location>
</feature>
<evidence type="ECO:0000250" key="1">
    <source>
        <dbReference type="UniProtKB" id="B8ZYW0"/>
    </source>
</evidence>
<evidence type="ECO:0000250" key="2">
    <source>
        <dbReference type="UniProtKB" id="Q60381"/>
    </source>
</evidence>
<evidence type="ECO:0000255" key="3">
    <source>
        <dbReference type="PROSITE-ProRule" id="PRU00675"/>
    </source>
</evidence>
<evidence type="ECO:0000269" key="4">
    <source>
    </source>
</evidence>
<evidence type="ECO:0000269" key="5">
    <source>
    </source>
</evidence>
<evidence type="ECO:0000303" key="6">
    <source>
    </source>
</evidence>
<evidence type="ECO:0000305" key="7"/>
<evidence type="ECO:0000312" key="8">
    <source>
        <dbReference type="EMBL" id="AAB89507.1"/>
    </source>
</evidence>
<evidence type="ECO:0007744" key="9">
    <source>
        <dbReference type="PDB" id="3NCP"/>
    </source>
</evidence>
<evidence type="ECO:0007744" key="10">
    <source>
        <dbReference type="PDB" id="3NCQ"/>
    </source>
</evidence>
<evidence type="ECO:0007744" key="11">
    <source>
        <dbReference type="PDB" id="3NCR"/>
    </source>
</evidence>
<evidence type="ECO:0007829" key="12">
    <source>
        <dbReference type="PDB" id="3NCQ"/>
    </source>
</evidence>
<proteinExistence type="evidence at protein level"/>
<comment type="function">
    <text evidence="2">Involved in the regulation of nitrogen metabolism (By similarity). Regulates the activity of its targets by protein-protein interaction in response to the nitrogen status of the cell (By similarity). Regulates the activity of the ammonia channel Amt2 via direct interaction (By similarity).</text>
</comment>
<comment type="activity regulation">
    <text evidence="4">Binding of adenosine nucleotides results in distinct, cooperative behavior for ATP and ADP. GlnK2 is completely insensitive to 2-oxoglutarate at a low level of intracellular nitrogen.</text>
</comment>
<comment type="subunit">
    <text evidence="2 4">Homotrimer (PubMed:20643148). Interacts and forms a complex with Amt2 (By similarity).</text>
</comment>
<comment type="subcellular location">
    <subcellularLocation>
        <location evidence="1">Cytoplasm</location>
    </subcellularLocation>
</comment>
<comment type="similarity">
    <text evidence="3">Belongs to the P(II) protein family.</text>
</comment>
<accession>O28527</accession>
<protein>
    <recommendedName>
        <fullName evidence="7">Nitrogen regulatory protein GlnK2</fullName>
    </recommendedName>
    <alternativeName>
        <fullName evidence="6">Af-GlnK-2</fullName>
    </alternativeName>
</protein>